<protein>
    <recommendedName>
        <fullName evidence="1">ClpXP adapter protein SpxH</fullName>
    </recommendedName>
</protein>
<keyword id="KW-0963">Cytoplasm</keyword>
<keyword id="KW-1185">Reference proteome</keyword>
<sequence length="272" mass="31222">MINQNLYYQSVANSKPIEIYLFFDPACDDCWNIEANMLRLQMEYGNYFKLRYVLHNNLQTFVCKQKRAGNSNLSLKEQQIGAHLSYISCLAVKAAELQGKKQGITFLRKIQAAYFLENKDIASDEVLYDIAVSTGLDLSEFKKDLASTVAKRAYIGDQKVAQEMEIHENPTVVFFNKNIEDAGLKLSGLHRYEVYVHVLSELLNDAPQPEERPQMEEYLAKVKVTSSASMADFYGVSEQQIERQMKKWRLQQKVELIDAPAGQSHWKYIGNL</sequence>
<name>SPXH_LISMO</name>
<organism>
    <name type="scientific">Listeria monocytogenes serovar 1/2a (strain ATCC BAA-679 / EGD-e)</name>
    <dbReference type="NCBI Taxonomy" id="169963"/>
    <lineage>
        <taxon>Bacteria</taxon>
        <taxon>Bacillati</taxon>
        <taxon>Bacillota</taxon>
        <taxon>Bacilli</taxon>
        <taxon>Bacillales</taxon>
        <taxon>Listeriaceae</taxon>
        <taxon>Listeria</taxon>
    </lineage>
</organism>
<feature type="chain" id="PRO_0000278686" description="ClpXP adapter protein SpxH">
    <location>
        <begin position="1"/>
        <end position="272"/>
    </location>
</feature>
<proteinExistence type="inferred from homology"/>
<comment type="function">
    <text evidence="1">Adapter protein required for efficient degradation of Spx by ClpXP under non-stress conditions. Interaction with Spx stabilizes Spx and exposes the C-terminus of Spx for recognition and proteolysis by ClpXP.</text>
</comment>
<comment type="subunit">
    <text evidence="1">Interacts with Spx.</text>
</comment>
<comment type="subcellular location">
    <subcellularLocation>
        <location evidence="1">Cytoplasm</location>
    </subcellularLocation>
</comment>
<comment type="similarity">
    <text evidence="1">Belongs to the SpxH family.</text>
</comment>
<gene>
    <name evidence="1" type="primary">spxH</name>
    <name type="ordered locus">lmo0964</name>
</gene>
<accession>Q8Y8E0</accession>
<dbReference type="EMBL" id="AL591977">
    <property type="protein sequence ID" value="CAC99042.1"/>
    <property type="molecule type" value="Genomic_DNA"/>
</dbReference>
<dbReference type="PIR" id="AD1195">
    <property type="entry name" value="AD1195"/>
</dbReference>
<dbReference type="RefSeq" id="NP_464489.1">
    <property type="nucleotide sequence ID" value="NC_003210.1"/>
</dbReference>
<dbReference type="SMR" id="Q8Y8E0"/>
<dbReference type="STRING" id="169963.gene:17593620"/>
<dbReference type="PaxDb" id="169963-lmo0964"/>
<dbReference type="EnsemblBacteria" id="CAC99042">
    <property type="protein sequence ID" value="CAC99042"/>
    <property type="gene ID" value="CAC99042"/>
</dbReference>
<dbReference type="GeneID" id="986468"/>
<dbReference type="KEGG" id="lmo:lmo0964"/>
<dbReference type="PATRIC" id="fig|169963.11.peg.991"/>
<dbReference type="eggNOG" id="COG2761">
    <property type="taxonomic scope" value="Bacteria"/>
</dbReference>
<dbReference type="HOGENOM" id="CLU_069785_0_0_9"/>
<dbReference type="OrthoDB" id="9813770at2"/>
<dbReference type="PhylomeDB" id="Q8Y8E0"/>
<dbReference type="BioCyc" id="LMON169963:LMO0964-MONOMER"/>
<dbReference type="PHI-base" id="PHI:10419"/>
<dbReference type="Proteomes" id="UP000000817">
    <property type="component" value="Chromosome"/>
</dbReference>
<dbReference type="GO" id="GO:0005737">
    <property type="term" value="C:cytoplasm"/>
    <property type="evidence" value="ECO:0007669"/>
    <property type="project" value="UniProtKB-SubCell"/>
</dbReference>
<dbReference type="CDD" id="cd03025">
    <property type="entry name" value="DsbA_FrnE_like"/>
    <property type="match status" value="1"/>
</dbReference>
<dbReference type="Gene3D" id="3.40.30.10">
    <property type="entry name" value="Glutaredoxin"/>
    <property type="match status" value="1"/>
</dbReference>
<dbReference type="HAMAP" id="MF_02245">
    <property type="entry name" value="Adapter_SpxH"/>
    <property type="match status" value="1"/>
</dbReference>
<dbReference type="InterPro" id="IPR046404">
    <property type="entry name" value="Adapter_SpxH"/>
</dbReference>
<dbReference type="InterPro" id="IPR036249">
    <property type="entry name" value="Thioredoxin-like_sf"/>
</dbReference>
<dbReference type="PANTHER" id="PTHR13887:SF47">
    <property type="entry name" value="CLPXP ADAPTER PROTEIN SPXH"/>
    <property type="match status" value="1"/>
</dbReference>
<dbReference type="PANTHER" id="PTHR13887">
    <property type="entry name" value="GLUTATHIONE S-TRANSFERASE KAPPA"/>
    <property type="match status" value="1"/>
</dbReference>
<dbReference type="Pfam" id="PF13743">
    <property type="entry name" value="Thioredoxin_5"/>
    <property type="match status" value="1"/>
</dbReference>
<dbReference type="SUPFAM" id="SSF52833">
    <property type="entry name" value="Thioredoxin-like"/>
    <property type="match status" value="1"/>
</dbReference>
<reference key="1">
    <citation type="journal article" date="2001" name="Science">
        <title>Comparative genomics of Listeria species.</title>
        <authorList>
            <person name="Glaser P."/>
            <person name="Frangeul L."/>
            <person name="Buchrieser C."/>
            <person name="Rusniok C."/>
            <person name="Amend A."/>
            <person name="Baquero F."/>
            <person name="Berche P."/>
            <person name="Bloecker H."/>
            <person name="Brandt P."/>
            <person name="Chakraborty T."/>
            <person name="Charbit A."/>
            <person name="Chetouani F."/>
            <person name="Couve E."/>
            <person name="de Daruvar A."/>
            <person name="Dehoux P."/>
            <person name="Domann E."/>
            <person name="Dominguez-Bernal G."/>
            <person name="Duchaud E."/>
            <person name="Durant L."/>
            <person name="Dussurget O."/>
            <person name="Entian K.-D."/>
            <person name="Fsihi H."/>
            <person name="Garcia-del Portillo F."/>
            <person name="Garrido P."/>
            <person name="Gautier L."/>
            <person name="Goebel W."/>
            <person name="Gomez-Lopez N."/>
            <person name="Hain T."/>
            <person name="Hauf J."/>
            <person name="Jackson D."/>
            <person name="Jones L.-M."/>
            <person name="Kaerst U."/>
            <person name="Kreft J."/>
            <person name="Kuhn M."/>
            <person name="Kunst F."/>
            <person name="Kurapkat G."/>
            <person name="Madueno E."/>
            <person name="Maitournam A."/>
            <person name="Mata Vicente J."/>
            <person name="Ng E."/>
            <person name="Nedjari H."/>
            <person name="Nordsiek G."/>
            <person name="Novella S."/>
            <person name="de Pablos B."/>
            <person name="Perez-Diaz J.-C."/>
            <person name="Purcell R."/>
            <person name="Remmel B."/>
            <person name="Rose M."/>
            <person name="Schlueter T."/>
            <person name="Simoes N."/>
            <person name="Tierrez A."/>
            <person name="Vazquez-Boland J.-A."/>
            <person name="Voss H."/>
            <person name="Wehland J."/>
            <person name="Cossart P."/>
        </authorList>
    </citation>
    <scope>NUCLEOTIDE SEQUENCE [LARGE SCALE GENOMIC DNA]</scope>
    <source>
        <strain>ATCC BAA-679 / EGD-e</strain>
    </source>
</reference>
<evidence type="ECO:0000255" key="1">
    <source>
        <dbReference type="HAMAP-Rule" id="MF_02245"/>
    </source>
</evidence>